<reference key="1">
    <citation type="journal article" date="2008" name="PLoS ONE">
        <title>A recalibrated molecular clock and independent origins for the cholera pandemic clones.</title>
        <authorList>
            <person name="Feng L."/>
            <person name="Reeves P.R."/>
            <person name="Lan R."/>
            <person name="Ren Y."/>
            <person name="Gao C."/>
            <person name="Zhou Z."/>
            <person name="Ren Y."/>
            <person name="Cheng J."/>
            <person name="Wang W."/>
            <person name="Wang J."/>
            <person name="Qian W."/>
            <person name="Li D."/>
            <person name="Wang L."/>
        </authorList>
    </citation>
    <scope>NUCLEOTIDE SEQUENCE [LARGE SCALE GENOMIC DNA]</scope>
    <source>
        <strain>M66-2</strain>
    </source>
</reference>
<keyword id="KW-0028">Amino-acid biosynthesis</keyword>
<keyword id="KW-0057">Aromatic amino acid biosynthesis</keyword>
<keyword id="KW-0456">Lyase</keyword>
<keyword id="KW-0822">Tryptophan biosynthesis</keyword>
<dbReference type="EC" id="4.2.1.20" evidence="1"/>
<dbReference type="EMBL" id="CP001233">
    <property type="protein sequence ID" value="ACP05441.1"/>
    <property type="molecule type" value="Genomic_DNA"/>
</dbReference>
<dbReference type="RefSeq" id="WP_001083161.1">
    <property type="nucleotide sequence ID" value="NC_012578.1"/>
</dbReference>
<dbReference type="SMR" id="C3LLL5"/>
<dbReference type="KEGG" id="vcm:VCM66_1124"/>
<dbReference type="HOGENOM" id="CLU_016734_0_4_6"/>
<dbReference type="UniPathway" id="UPA00035">
    <property type="reaction ID" value="UER00044"/>
</dbReference>
<dbReference type="Proteomes" id="UP000001217">
    <property type="component" value="Chromosome I"/>
</dbReference>
<dbReference type="GO" id="GO:0005829">
    <property type="term" value="C:cytosol"/>
    <property type="evidence" value="ECO:0007669"/>
    <property type="project" value="TreeGrafter"/>
</dbReference>
<dbReference type="GO" id="GO:0004834">
    <property type="term" value="F:tryptophan synthase activity"/>
    <property type="evidence" value="ECO:0007669"/>
    <property type="project" value="UniProtKB-UniRule"/>
</dbReference>
<dbReference type="CDD" id="cd04724">
    <property type="entry name" value="Tryptophan_synthase_alpha"/>
    <property type="match status" value="1"/>
</dbReference>
<dbReference type="FunFam" id="3.20.20.70:FF:000037">
    <property type="entry name" value="Tryptophan synthase alpha chain"/>
    <property type="match status" value="1"/>
</dbReference>
<dbReference type="Gene3D" id="3.20.20.70">
    <property type="entry name" value="Aldolase class I"/>
    <property type="match status" value="1"/>
</dbReference>
<dbReference type="HAMAP" id="MF_00131">
    <property type="entry name" value="Trp_synth_alpha"/>
    <property type="match status" value="1"/>
</dbReference>
<dbReference type="InterPro" id="IPR013785">
    <property type="entry name" value="Aldolase_TIM"/>
</dbReference>
<dbReference type="InterPro" id="IPR011060">
    <property type="entry name" value="RibuloseP-bd_barrel"/>
</dbReference>
<dbReference type="InterPro" id="IPR018204">
    <property type="entry name" value="Trp_synthase_alpha_AS"/>
</dbReference>
<dbReference type="InterPro" id="IPR002028">
    <property type="entry name" value="Trp_synthase_suA"/>
</dbReference>
<dbReference type="NCBIfam" id="TIGR00262">
    <property type="entry name" value="trpA"/>
    <property type="match status" value="1"/>
</dbReference>
<dbReference type="PANTHER" id="PTHR43406:SF1">
    <property type="entry name" value="TRYPTOPHAN SYNTHASE ALPHA CHAIN, CHLOROPLASTIC"/>
    <property type="match status" value="1"/>
</dbReference>
<dbReference type="PANTHER" id="PTHR43406">
    <property type="entry name" value="TRYPTOPHAN SYNTHASE, ALPHA CHAIN"/>
    <property type="match status" value="1"/>
</dbReference>
<dbReference type="Pfam" id="PF00290">
    <property type="entry name" value="Trp_syntA"/>
    <property type="match status" value="1"/>
</dbReference>
<dbReference type="SUPFAM" id="SSF51366">
    <property type="entry name" value="Ribulose-phoshate binding barrel"/>
    <property type="match status" value="1"/>
</dbReference>
<dbReference type="PROSITE" id="PS00167">
    <property type="entry name" value="TRP_SYNTHASE_ALPHA"/>
    <property type="match status" value="1"/>
</dbReference>
<evidence type="ECO:0000255" key="1">
    <source>
        <dbReference type="HAMAP-Rule" id="MF_00131"/>
    </source>
</evidence>
<sequence length="268" mass="28494">MNRYQALFQRLSAAQQGAFVPFVTIGDPNPEQSLAIMQTLIDAGADALELGMPFSDPLADGPTIQGANLRALAAKTTPDICFELIAQIRARNPETPIGLLMYANLVYARGIDDFYQRCQKAGVDSVLIADVPTNESQPFVAAAEKFGIQPIFIAPPTASDETLRAVAQLGKGYTYLLSRAGVTGAETKANMPVHALLERLQQFDAPPALLGFGISEPAQVKQAIEAGAAGAISGSAVVKIIETHLDNPAKQLTELANFTQAMKKATKI</sequence>
<accession>C3LLL5</accession>
<gene>
    <name evidence="1" type="primary">trpA</name>
    <name type="ordered locus">VCM66_1124</name>
</gene>
<name>TRPA_VIBCM</name>
<protein>
    <recommendedName>
        <fullName evidence="1">Tryptophan synthase alpha chain</fullName>
        <ecNumber evidence="1">4.2.1.20</ecNumber>
    </recommendedName>
</protein>
<organism>
    <name type="scientific">Vibrio cholerae serotype O1 (strain M66-2)</name>
    <dbReference type="NCBI Taxonomy" id="579112"/>
    <lineage>
        <taxon>Bacteria</taxon>
        <taxon>Pseudomonadati</taxon>
        <taxon>Pseudomonadota</taxon>
        <taxon>Gammaproteobacteria</taxon>
        <taxon>Vibrionales</taxon>
        <taxon>Vibrionaceae</taxon>
        <taxon>Vibrio</taxon>
    </lineage>
</organism>
<comment type="function">
    <text evidence="1">The alpha subunit is responsible for the aldol cleavage of indoleglycerol phosphate to indole and glyceraldehyde 3-phosphate.</text>
</comment>
<comment type="catalytic activity">
    <reaction evidence="1">
        <text>(1S,2R)-1-C-(indol-3-yl)glycerol 3-phosphate + L-serine = D-glyceraldehyde 3-phosphate + L-tryptophan + H2O</text>
        <dbReference type="Rhea" id="RHEA:10532"/>
        <dbReference type="ChEBI" id="CHEBI:15377"/>
        <dbReference type="ChEBI" id="CHEBI:33384"/>
        <dbReference type="ChEBI" id="CHEBI:57912"/>
        <dbReference type="ChEBI" id="CHEBI:58866"/>
        <dbReference type="ChEBI" id="CHEBI:59776"/>
        <dbReference type="EC" id="4.2.1.20"/>
    </reaction>
</comment>
<comment type="pathway">
    <text evidence="1">Amino-acid biosynthesis; L-tryptophan biosynthesis; L-tryptophan from chorismate: step 5/5.</text>
</comment>
<comment type="subunit">
    <text evidence="1">Tetramer of two alpha and two beta chains.</text>
</comment>
<comment type="similarity">
    <text evidence="1">Belongs to the TrpA family.</text>
</comment>
<proteinExistence type="inferred from homology"/>
<feature type="chain" id="PRO_1000198733" description="Tryptophan synthase alpha chain">
    <location>
        <begin position="1"/>
        <end position="268"/>
    </location>
</feature>
<feature type="active site" description="Proton acceptor" evidence="1">
    <location>
        <position position="49"/>
    </location>
</feature>
<feature type="active site" description="Proton acceptor" evidence="1">
    <location>
        <position position="60"/>
    </location>
</feature>